<dbReference type="EC" id="7.1.1.-" evidence="1"/>
<dbReference type="EMBL" id="DQ887676">
    <property type="protein sequence ID" value="ABH88359.1"/>
    <property type="molecule type" value="Genomic_DNA"/>
</dbReference>
<dbReference type="SMR" id="P0CC59"/>
<dbReference type="GO" id="GO:0009535">
    <property type="term" value="C:chloroplast thylakoid membrane"/>
    <property type="evidence" value="ECO:0007669"/>
    <property type="project" value="UniProtKB-SubCell"/>
</dbReference>
<dbReference type="GO" id="GO:0008137">
    <property type="term" value="F:NADH dehydrogenase (ubiquinone) activity"/>
    <property type="evidence" value="ECO:0007669"/>
    <property type="project" value="InterPro"/>
</dbReference>
<dbReference type="GO" id="GO:0048038">
    <property type="term" value="F:quinone binding"/>
    <property type="evidence" value="ECO:0007669"/>
    <property type="project" value="UniProtKB-KW"/>
</dbReference>
<dbReference type="GO" id="GO:0042773">
    <property type="term" value="P:ATP synthesis coupled electron transport"/>
    <property type="evidence" value="ECO:0007669"/>
    <property type="project" value="InterPro"/>
</dbReference>
<dbReference type="GO" id="GO:0019684">
    <property type="term" value="P:photosynthesis, light reaction"/>
    <property type="evidence" value="ECO:0007669"/>
    <property type="project" value="UniProtKB-UniRule"/>
</dbReference>
<dbReference type="HAMAP" id="MF_00445">
    <property type="entry name" value="NDH1_NuoN_1"/>
    <property type="match status" value="1"/>
</dbReference>
<dbReference type="InterPro" id="IPR010096">
    <property type="entry name" value="NADH-Q_OxRdtase_suN/2"/>
</dbReference>
<dbReference type="InterPro" id="IPR001750">
    <property type="entry name" value="ND/Mrp_TM"/>
</dbReference>
<dbReference type="InterPro" id="IPR045693">
    <property type="entry name" value="Ndh2_N"/>
</dbReference>
<dbReference type="NCBIfam" id="TIGR01770">
    <property type="entry name" value="NDH_I_N"/>
    <property type="match status" value="1"/>
</dbReference>
<dbReference type="NCBIfam" id="NF002701">
    <property type="entry name" value="PRK02504.1"/>
    <property type="match status" value="1"/>
</dbReference>
<dbReference type="PANTHER" id="PTHR22773">
    <property type="entry name" value="NADH DEHYDROGENASE"/>
    <property type="match status" value="1"/>
</dbReference>
<dbReference type="Pfam" id="PF19530">
    <property type="entry name" value="Ndh2_N"/>
    <property type="match status" value="1"/>
</dbReference>
<dbReference type="Pfam" id="PF00361">
    <property type="entry name" value="Proton_antipo_M"/>
    <property type="match status" value="1"/>
</dbReference>
<dbReference type="PRINTS" id="PR01434">
    <property type="entry name" value="NADHDHGNASE5"/>
</dbReference>
<name>NU2C2_DRIGR</name>
<keyword id="KW-0150">Chloroplast</keyword>
<keyword id="KW-0472">Membrane</keyword>
<keyword id="KW-0520">NAD</keyword>
<keyword id="KW-0521">NADP</keyword>
<keyword id="KW-0934">Plastid</keyword>
<keyword id="KW-0618">Plastoquinone</keyword>
<keyword id="KW-0874">Quinone</keyword>
<keyword id="KW-0793">Thylakoid</keyword>
<keyword id="KW-1278">Translocase</keyword>
<keyword id="KW-0812">Transmembrane</keyword>
<keyword id="KW-1133">Transmembrane helix</keyword>
<keyword id="KW-0813">Transport</keyword>
<organism>
    <name type="scientific">Drimys granadensis</name>
    <dbReference type="NCBI Taxonomy" id="224735"/>
    <lineage>
        <taxon>Eukaryota</taxon>
        <taxon>Viridiplantae</taxon>
        <taxon>Streptophyta</taxon>
        <taxon>Embryophyta</taxon>
        <taxon>Tracheophyta</taxon>
        <taxon>Spermatophyta</taxon>
        <taxon>Magnoliopsida</taxon>
        <taxon>Magnoliidae</taxon>
        <taxon>Canellales</taxon>
        <taxon>Winteraceae</taxon>
        <taxon>Drimys</taxon>
    </lineage>
</organism>
<geneLocation type="chloroplast"/>
<comment type="function">
    <text evidence="1">NDH shuttles electrons from NAD(P)H:plastoquinone, via FMN and iron-sulfur (Fe-S) centers, to quinones in the photosynthetic chain and possibly in a chloroplast respiratory chain. The immediate electron acceptor for the enzyme in this species is believed to be plastoquinone. Couples the redox reaction to proton translocation, and thus conserves the redox energy in a proton gradient.</text>
</comment>
<comment type="catalytic activity">
    <reaction evidence="1">
        <text>a plastoquinone + NADH + (n+1) H(+)(in) = a plastoquinol + NAD(+) + n H(+)(out)</text>
        <dbReference type="Rhea" id="RHEA:42608"/>
        <dbReference type="Rhea" id="RHEA-COMP:9561"/>
        <dbReference type="Rhea" id="RHEA-COMP:9562"/>
        <dbReference type="ChEBI" id="CHEBI:15378"/>
        <dbReference type="ChEBI" id="CHEBI:17757"/>
        <dbReference type="ChEBI" id="CHEBI:57540"/>
        <dbReference type="ChEBI" id="CHEBI:57945"/>
        <dbReference type="ChEBI" id="CHEBI:62192"/>
    </reaction>
</comment>
<comment type="catalytic activity">
    <reaction evidence="1">
        <text>a plastoquinone + NADPH + (n+1) H(+)(in) = a plastoquinol + NADP(+) + n H(+)(out)</text>
        <dbReference type="Rhea" id="RHEA:42612"/>
        <dbReference type="Rhea" id="RHEA-COMP:9561"/>
        <dbReference type="Rhea" id="RHEA-COMP:9562"/>
        <dbReference type="ChEBI" id="CHEBI:15378"/>
        <dbReference type="ChEBI" id="CHEBI:17757"/>
        <dbReference type="ChEBI" id="CHEBI:57783"/>
        <dbReference type="ChEBI" id="CHEBI:58349"/>
        <dbReference type="ChEBI" id="CHEBI:62192"/>
    </reaction>
</comment>
<comment type="subunit">
    <text evidence="1">NDH is composed of at least 16 different subunits, 5 of which are encoded in the nucleus.</text>
</comment>
<comment type="subcellular location">
    <subcellularLocation>
        <location evidence="1">Plastid</location>
        <location evidence="1">Chloroplast thylakoid membrane</location>
        <topology evidence="1">Multi-pass membrane protein</topology>
    </subcellularLocation>
</comment>
<comment type="similarity">
    <text evidence="1">Belongs to the complex I subunit 2 family.</text>
</comment>
<gene>
    <name evidence="1" type="primary">ndhB2</name>
</gene>
<protein>
    <recommendedName>
        <fullName evidence="1">NAD(P)H-quinone oxidoreductase subunit 2 B, chloroplastic</fullName>
        <ecNumber evidence="1">7.1.1.-</ecNumber>
    </recommendedName>
    <alternativeName>
        <fullName evidence="1">NAD(P)H dehydrogenase, subunit 2 B</fullName>
    </alternativeName>
    <alternativeName>
        <fullName evidence="1">NADH-plastoquinone oxidoreductase subunit 2 B</fullName>
    </alternativeName>
</protein>
<feature type="chain" id="PRO_0000391267" description="NAD(P)H-quinone oxidoreductase subunit 2 B, chloroplastic">
    <location>
        <begin position="1"/>
        <end position="510"/>
    </location>
</feature>
<feature type="transmembrane region" description="Helical" evidence="1">
    <location>
        <begin position="24"/>
        <end position="44"/>
    </location>
</feature>
<feature type="transmembrane region" description="Helical" evidence="1">
    <location>
        <begin position="57"/>
        <end position="77"/>
    </location>
</feature>
<feature type="transmembrane region" description="Helical" evidence="1">
    <location>
        <begin position="99"/>
        <end position="119"/>
    </location>
</feature>
<feature type="transmembrane region" description="Helical" evidence="1">
    <location>
        <begin position="124"/>
        <end position="144"/>
    </location>
</feature>
<feature type="transmembrane region" description="Helical" evidence="1">
    <location>
        <begin position="150"/>
        <end position="170"/>
    </location>
</feature>
<feature type="transmembrane region" description="Helical" evidence="1">
    <location>
        <begin position="183"/>
        <end position="203"/>
    </location>
</feature>
<feature type="transmembrane region" description="Helical" evidence="1">
    <location>
        <begin position="229"/>
        <end position="249"/>
    </location>
</feature>
<feature type="transmembrane region" description="Helical" evidence="1">
    <location>
        <begin position="295"/>
        <end position="315"/>
    </location>
</feature>
<feature type="transmembrane region" description="Helical" evidence="1">
    <location>
        <begin position="323"/>
        <end position="343"/>
    </location>
</feature>
<feature type="transmembrane region" description="Helical" evidence="1">
    <location>
        <begin position="354"/>
        <end position="374"/>
    </location>
</feature>
<feature type="transmembrane region" description="Helical" evidence="1">
    <location>
        <begin position="395"/>
        <end position="415"/>
    </location>
</feature>
<feature type="transmembrane region" description="Helical" evidence="1">
    <location>
        <begin position="418"/>
        <end position="438"/>
    </location>
</feature>
<feature type="transmembrane region" description="Helical" evidence="1">
    <location>
        <begin position="484"/>
        <end position="504"/>
    </location>
</feature>
<evidence type="ECO:0000255" key="1">
    <source>
        <dbReference type="HAMAP-Rule" id="MF_00445"/>
    </source>
</evidence>
<accession>P0CC59</accession>
<accession>Q06GT6</accession>
<proteinExistence type="inferred from homology"/>
<reference key="1">
    <citation type="journal article" date="2006" name="BMC Evol. Biol.">
        <title>Complete plastid genome sequences of Drimys, Liriodendron, and Piper: implications for the phylogenetic relationships of magnoliids.</title>
        <authorList>
            <person name="Cai Z."/>
            <person name="Penaflor C."/>
            <person name="Kuehl J.V."/>
            <person name="Leebens-Mack J."/>
            <person name="Carlson J.E."/>
            <person name="dePamphilis C.W."/>
            <person name="Boore J.L."/>
            <person name="Jansen R.K."/>
        </authorList>
    </citation>
    <scope>NUCLEOTIDE SEQUENCE [LARGE SCALE GENOMIC DNA]</scope>
</reference>
<sequence length="510" mass="56746">MIWHVQNENFILDSTRIFMKAFHLLLFHGSFIFPECILIFGLILLLMIDSTSDQKDIPWLYFISSTSLVMSITALLFRWREEPMISFSGNFQTNNFNEIFQFLILLCSTLCIPLSVEYIECTEMAITEFLLFVLTATLGGMFLCGANDSITIFVAPECFSLCSYLLSGYTKRDVRSNEATTKYLLMGGASSSILVHGFSWLYGSSGGEIELQEIVNGLINTQMYNSPGISIALIFITVGIGFKLSPAPFHQWTPDVYEGSPTPVVAFLSVTSKVAASAPATRIFDIPFYFSSNEWHLLLEILAILSMILGNLIAITQTSMKRMLAYSSIGQIGYVIIGIIVGDSNDGYASMITYMLFYISMNLGTFARIVLFGLRTGTDNIRDYAGLYTKDPFLALSSALCLLSLGGLPPLAGFFGKLHLFWCGWQAGLYFLVSIGLLTSVVSIYYYLKIIKLLMTGRKQEITPHVRNYRRSPLRSNNSIELSMIVCVIASTIPGISMNPIIAIAQDTLF</sequence>